<organism>
    <name type="scientific">Burkholderia thailandensis (strain ATCC 700388 / DSM 13276 / CCUG 48851 / CIP 106301 / E264)</name>
    <dbReference type="NCBI Taxonomy" id="271848"/>
    <lineage>
        <taxon>Bacteria</taxon>
        <taxon>Pseudomonadati</taxon>
        <taxon>Pseudomonadota</taxon>
        <taxon>Betaproteobacteria</taxon>
        <taxon>Burkholderiales</taxon>
        <taxon>Burkholderiaceae</taxon>
        <taxon>Burkholderia</taxon>
        <taxon>pseudomallei group</taxon>
    </lineage>
</organism>
<accession>Q2SUG2</accession>
<protein>
    <recommendedName>
        <fullName evidence="1">Peptide chain release factor 1</fullName>
        <shortName evidence="1">RF-1</shortName>
    </recommendedName>
</protein>
<dbReference type="EMBL" id="CP000086">
    <property type="protein sequence ID" value="ABC38863.1"/>
    <property type="molecule type" value="Genomic_DNA"/>
</dbReference>
<dbReference type="RefSeq" id="WP_009888664.1">
    <property type="nucleotide sequence ID" value="NZ_CP008786.1"/>
</dbReference>
<dbReference type="SMR" id="Q2SUG2"/>
<dbReference type="GeneID" id="45122621"/>
<dbReference type="KEGG" id="bte:BTH_I2930"/>
<dbReference type="HOGENOM" id="CLU_036856_0_1_4"/>
<dbReference type="Proteomes" id="UP000001930">
    <property type="component" value="Chromosome I"/>
</dbReference>
<dbReference type="GO" id="GO:0005737">
    <property type="term" value="C:cytoplasm"/>
    <property type="evidence" value="ECO:0007669"/>
    <property type="project" value="UniProtKB-SubCell"/>
</dbReference>
<dbReference type="GO" id="GO:0016149">
    <property type="term" value="F:translation release factor activity, codon specific"/>
    <property type="evidence" value="ECO:0007669"/>
    <property type="project" value="UniProtKB-UniRule"/>
</dbReference>
<dbReference type="FunFam" id="3.30.160.20:FF:000004">
    <property type="entry name" value="Peptide chain release factor 1"/>
    <property type="match status" value="1"/>
</dbReference>
<dbReference type="FunFam" id="3.30.70.1660:FF:000002">
    <property type="entry name" value="Peptide chain release factor 1"/>
    <property type="match status" value="1"/>
</dbReference>
<dbReference type="FunFam" id="3.30.70.1660:FF:000004">
    <property type="entry name" value="Peptide chain release factor 1"/>
    <property type="match status" value="1"/>
</dbReference>
<dbReference type="Gene3D" id="3.30.160.20">
    <property type="match status" value="1"/>
</dbReference>
<dbReference type="Gene3D" id="3.30.70.1660">
    <property type="match status" value="1"/>
</dbReference>
<dbReference type="Gene3D" id="6.10.140.1950">
    <property type="match status" value="1"/>
</dbReference>
<dbReference type="HAMAP" id="MF_00093">
    <property type="entry name" value="Rel_fac_1"/>
    <property type="match status" value="1"/>
</dbReference>
<dbReference type="InterPro" id="IPR005139">
    <property type="entry name" value="PCRF"/>
</dbReference>
<dbReference type="InterPro" id="IPR000352">
    <property type="entry name" value="Pep_chain_release_fac_I"/>
</dbReference>
<dbReference type="InterPro" id="IPR045853">
    <property type="entry name" value="Pep_chain_release_fac_I_sf"/>
</dbReference>
<dbReference type="InterPro" id="IPR050057">
    <property type="entry name" value="Prokaryotic/Mito_RF"/>
</dbReference>
<dbReference type="InterPro" id="IPR004373">
    <property type="entry name" value="RF-1"/>
</dbReference>
<dbReference type="NCBIfam" id="TIGR00019">
    <property type="entry name" value="prfA"/>
    <property type="match status" value="1"/>
</dbReference>
<dbReference type="NCBIfam" id="NF001859">
    <property type="entry name" value="PRK00591.1"/>
    <property type="match status" value="1"/>
</dbReference>
<dbReference type="PANTHER" id="PTHR43804">
    <property type="entry name" value="LD18447P"/>
    <property type="match status" value="1"/>
</dbReference>
<dbReference type="PANTHER" id="PTHR43804:SF7">
    <property type="entry name" value="LD18447P"/>
    <property type="match status" value="1"/>
</dbReference>
<dbReference type="Pfam" id="PF03462">
    <property type="entry name" value="PCRF"/>
    <property type="match status" value="1"/>
</dbReference>
<dbReference type="Pfam" id="PF00472">
    <property type="entry name" value="RF-1"/>
    <property type="match status" value="1"/>
</dbReference>
<dbReference type="SMART" id="SM00937">
    <property type="entry name" value="PCRF"/>
    <property type="match status" value="1"/>
</dbReference>
<dbReference type="SUPFAM" id="SSF75620">
    <property type="entry name" value="Release factor"/>
    <property type="match status" value="1"/>
</dbReference>
<dbReference type="PROSITE" id="PS00745">
    <property type="entry name" value="RF_PROK_I"/>
    <property type="match status" value="1"/>
</dbReference>
<gene>
    <name evidence="1" type="primary">prfA</name>
    <name type="ordered locus">BTH_I2930</name>
</gene>
<reference key="1">
    <citation type="journal article" date="2005" name="BMC Genomics">
        <title>Bacterial genome adaptation to niches: divergence of the potential virulence genes in three Burkholderia species of different survival strategies.</title>
        <authorList>
            <person name="Kim H.S."/>
            <person name="Schell M.A."/>
            <person name="Yu Y."/>
            <person name="Ulrich R.L."/>
            <person name="Sarria S.H."/>
            <person name="Nierman W.C."/>
            <person name="DeShazer D."/>
        </authorList>
    </citation>
    <scope>NUCLEOTIDE SEQUENCE [LARGE SCALE GENOMIC DNA]</scope>
    <source>
        <strain>ATCC 700388 / DSM 13276 / CCUG 48851 / CIP 106301 / E264</strain>
    </source>
</reference>
<keyword id="KW-0963">Cytoplasm</keyword>
<keyword id="KW-0488">Methylation</keyword>
<keyword id="KW-0648">Protein biosynthesis</keyword>
<comment type="function">
    <text evidence="1">Peptide chain release factor 1 directs the termination of translation in response to the peptide chain termination codons UAG and UAA.</text>
</comment>
<comment type="subcellular location">
    <subcellularLocation>
        <location evidence="1">Cytoplasm</location>
    </subcellularLocation>
</comment>
<comment type="PTM">
    <text evidence="1">Methylated by PrmC. Methylation increases the termination efficiency of RF1.</text>
</comment>
<comment type="similarity">
    <text evidence="1">Belongs to the prokaryotic/mitochondrial release factor family.</text>
</comment>
<name>RF1_BURTA</name>
<evidence type="ECO:0000255" key="1">
    <source>
        <dbReference type="HAMAP-Rule" id="MF_00093"/>
    </source>
</evidence>
<proteinExistence type="inferred from homology"/>
<feature type="chain" id="PRO_0000263247" description="Peptide chain release factor 1">
    <location>
        <begin position="1"/>
        <end position="360"/>
    </location>
</feature>
<feature type="modified residue" description="N5-methylglutamine" evidence="1">
    <location>
        <position position="235"/>
    </location>
</feature>
<sequence>MKTSMQSKLDQLTTRLAELNDLLSRENVTADLDQYRKLTREHAEIGPVVEHYAQWRQARADELAAQELLADASMRDFAEDELRGARERMSRLAAELQTMLLPKDPNDERNIFVEIRAGTGGDESALFAGDLLRMYLRYAERQRWQVEMMSESPSDLGGYKEVIVRIAGYGAYSRLKFESGGHRVQRVPATETQGRIHTSACTVAVMPEADEIGEVEINPADLRIDTFRASGAGGQHINKTDSAVRVTHIPTGIVVECQDDRSQHKNKDRALKVLAARIKDKQYHEQHAKEAATRKSLIGSGDRSERIRTYNFPQGRMTDHRINLTLYKLEQIMDGDLDELIAALVSEHQAELLASLGDAE</sequence>